<keyword id="KW-0963">Cytoplasm</keyword>
<keyword id="KW-0227">DNA damage</keyword>
<keyword id="KW-0233">DNA recombination</keyword>
<keyword id="KW-0234">DNA repair</keyword>
<keyword id="KW-0238">DNA-binding</keyword>
<keyword id="KW-0255">Endonuclease</keyword>
<keyword id="KW-0378">Hydrolase</keyword>
<keyword id="KW-0460">Magnesium</keyword>
<keyword id="KW-0479">Metal-binding</keyword>
<keyword id="KW-0540">Nuclease</keyword>
<keyword id="KW-1185">Reference proteome</keyword>
<reference key="1">
    <citation type="journal article" date="2007" name="J. Bacteriol.">
        <title>The genome sequence of avian pathogenic Escherichia coli strain O1:K1:H7 shares strong similarities with human extraintestinal pathogenic E. coli genomes.</title>
        <authorList>
            <person name="Johnson T.J."/>
            <person name="Kariyawasam S."/>
            <person name="Wannemuehler Y."/>
            <person name="Mangiamele P."/>
            <person name="Johnson S.J."/>
            <person name="Doetkott C."/>
            <person name="Skyberg J.A."/>
            <person name="Lynne A.M."/>
            <person name="Johnson J.R."/>
            <person name="Nolan L.K."/>
        </authorList>
    </citation>
    <scope>NUCLEOTIDE SEQUENCE [LARGE SCALE GENOMIC DNA]</scope>
</reference>
<proteinExistence type="inferred from homology"/>
<feature type="chain" id="PRO_0000332417" description="Crossover junction endodeoxyribonuclease RuvC">
    <location>
        <begin position="1"/>
        <end position="173"/>
    </location>
</feature>
<feature type="active site" evidence="1">
    <location>
        <position position="8"/>
    </location>
</feature>
<feature type="active site" evidence="1">
    <location>
        <position position="67"/>
    </location>
</feature>
<feature type="active site" evidence="1">
    <location>
        <position position="139"/>
    </location>
</feature>
<feature type="binding site" evidence="1">
    <location>
        <position position="8"/>
    </location>
    <ligand>
        <name>Mg(2+)</name>
        <dbReference type="ChEBI" id="CHEBI:18420"/>
        <label>1</label>
    </ligand>
</feature>
<feature type="binding site" evidence="1">
    <location>
        <position position="67"/>
    </location>
    <ligand>
        <name>Mg(2+)</name>
        <dbReference type="ChEBI" id="CHEBI:18420"/>
        <label>2</label>
    </ligand>
</feature>
<feature type="binding site" evidence="1">
    <location>
        <position position="139"/>
    </location>
    <ligand>
        <name>Mg(2+)</name>
        <dbReference type="ChEBI" id="CHEBI:18420"/>
        <label>1</label>
    </ligand>
</feature>
<gene>
    <name evidence="1" type="primary">ruvC</name>
    <name type="ordered locus">Ecok1_17200</name>
    <name type="ORF">APECO1_913</name>
</gene>
<evidence type="ECO:0000255" key="1">
    <source>
        <dbReference type="HAMAP-Rule" id="MF_00034"/>
    </source>
</evidence>
<evidence type="ECO:0000305" key="2"/>
<dbReference type="EC" id="3.1.21.10" evidence="1"/>
<dbReference type="EMBL" id="CP000468">
    <property type="protein sequence ID" value="ABJ01214.1"/>
    <property type="status" value="ALT_INIT"/>
    <property type="molecule type" value="Genomic_DNA"/>
</dbReference>
<dbReference type="RefSeq" id="WP_001295503.1">
    <property type="nucleotide sequence ID" value="NZ_CADILS010000028.1"/>
</dbReference>
<dbReference type="SMR" id="A1AC24"/>
<dbReference type="GeneID" id="89516631"/>
<dbReference type="KEGG" id="ecv:APECO1_913"/>
<dbReference type="HOGENOM" id="CLU_091257_2_1_6"/>
<dbReference type="Proteomes" id="UP000008216">
    <property type="component" value="Chromosome"/>
</dbReference>
<dbReference type="GO" id="GO:0005737">
    <property type="term" value="C:cytoplasm"/>
    <property type="evidence" value="ECO:0007669"/>
    <property type="project" value="UniProtKB-SubCell"/>
</dbReference>
<dbReference type="GO" id="GO:0048476">
    <property type="term" value="C:Holliday junction resolvase complex"/>
    <property type="evidence" value="ECO:0007669"/>
    <property type="project" value="UniProtKB-UniRule"/>
</dbReference>
<dbReference type="GO" id="GO:0008821">
    <property type="term" value="F:crossover junction DNA endonuclease activity"/>
    <property type="evidence" value="ECO:0007669"/>
    <property type="project" value="UniProtKB-UniRule"/>
</dbReference>
<dbReference type="GO" id="GO:0003677">
    <property type="term" value="F:DNA binding"/>
    <property type="evidence" value="ECO:0007669"/>
    <property type="project" value="UniProtKB-KW"/>
</dbReference>
<dbReference type="GO" id="GO:0000287">
    <property type="term" value="F:magnesium ion binding"/>
    <property type="evidence" value="ECO:0007669"/>
    <property type="project" value="UniProtKB-UniRule"/>
</dbReference>
<dbReference type="GO" id="GO:0006310">
    <property type="term" value="P:DNA recombination"/>
    <property type="evidence" value="ECO:0007669"/>
    <property type="project" value="UniProtKB-UniRule"/>
</dbReference>
<dbReference type="GO" id="GO:0006281">
    <property type="term" value="P:DNA repair"/>
    <property type="evidence" value="ECO:0007669"/>
    <property type="project" value="UniProtKB-UniRule"/>
</dbReference>
<dbReference type="CDD" id="cd16962">
    <property type="entry name" value="RuvC"/>
    <property type="match status" value="1"/>
</dbReference>
<dbReference type="FunFam" id="3.30.420.10:FF:000002">
    <property type="entry name" value="Crossover junction endodeoxyribonuclease RuvC"/>
    <property type="match status" value="1"/>
</dbReference>
<dbReference type="Gene3D" id="3.30.420.10">
    <property type="entry name" value="Ribonuclease H-like superfamily/Ribonuclease H"/>
    <property type="match status" value="1"/>
</dbReference>
<dbReference type="HAMAP" id="MF_00034">
    <property type="entry name" value="RuvC"/>
    <property type="match status" value="1"/>
</dbReference>
<dbReference type="InterPro" id="IPR012337">
    <property type="entry name" value="RNaseH-like_sf"/>
</dbReference>
<dbReference type="InterPro" id="IPR036397">
    <property type="entry name" value="RNaseH_sf"/>
</dbReference>
<dbReference type="InterPro" id="IPR020563">
    <property type="entry name" value="X-over_junc_endoDNase_Mg_BS"/>
</dbReference>
<dbReference type="InterPro" id="IPR002176">
    <property type="entry name" value="X-over_junc_endoDNase_RuvC"/>
</dbReference>
<dbReference type="NCBIfam" id="NF000711">
    <property type="entry name" value="PRK00039.2-1"/>
    <property type="match status" value="1"/>
</dbReference>
<dbReference type="NCBIfam" id="TIGR00228">
    <property type="entry name" value="ruvC"/>
    <property type="match status" value="1"/>
</dbReference>
<dbReference type="PANTHER" id="PTHR30194">
    <property type="entry name" value="CROSSOVER JUNCTION ENDODEOXYRIBONUCLEASE RUVC"/>
    <property type="match status" value="1"/>
</dbReference>
<dbReference type="PANTHER" id="PTHR30194:SF3">
    <property type="entry name" value="CROSSOVER JUNCTION ENDODEOXYRIBONUCLEASE RUVC"/>
    <property type="match status" value="1"/>
</dbReference>
<dbReference type="Pfam" id="PF02075">
    <property type="entry name" value="RuvC"/>
    <property type="match status" value="1"/>
</dbReference>
<dbReference type="PRINTS" id="PR00696">
    <property type="entry name" value="RSOLVASERUVC"/>
</dbReference>
<dbReference type="SUPFAM" id="SSF53098">
    <property type="entry name" value="Ribonuclease H-like"/>
    <property type="match status" value="1"/>
</dbReference>
<dbReference type="PROSITE" id="PS01321">
    <property type="entry name" value="RUVC"/>
    <property type="match status" value="1"/>
</dbReference>
<accession>A1AC24</accession>
<sequence>MAIILGIDPGSRVTGYGVIRQVGRQLSYLGSGCIRTKVDDLPSRLKLIYAGVTEIITQFQPDYFAIEQVFMAKNADSALKLGQARGVAIVAAVNQELPVFEYAARQVKQTVVGIGSAEKSQVQHMVRTLLKLPANPQADAADALAIAITHCHVSQNAMQMSESRLNLARGRLR</sequence>
<comment type="function">
    <text evidence="1">The RuvA-RuvB-RuvC complex processes Holliday junction (HJ) DNA during genetic recombination and DNA repair. Endonuclease that resolves HJ intermediates. Cleaves cruciform DNA by making single-stranded nicks across the HJ at symmetrical positions within the homologous arms, yielding a 5'-phosphate and a 3'-hydroxyl group; requires a central core of homology in the junction. The consensus cleavage sequence is 5'-(A/T)TT(C/G)-3'. Cleavage occurs on the 3'-side of the TT dinucleotide at the point of strand exchange. HJ branch migration catalyzed by RuvA-RuvB allows RuvC to scan DNA until it finds its consensus sequence, where it cleaves and resolves the cruciform DNA.</text>
</comment>
<comment type="catalytic activity">
    <reaction evidence="1">
        <text>Endonucleolytic cleavage at a junction such as a reciprocal single-stranded crossover between two homologous DNA duplexes (Holliday junction).</text>
        <dbReference type="EC" id="3.1.21.10"/>
    </reaction>
</comment>
<comment type="cofactor">
    <cofactor evidence="1">
        <name>Mg(2+)</name>
        <dbReference type="ChEBI" id="CHEBI:18420"/>
    </cofactor>
    <text evidence="1">Binds 2 Mg(2+) ion per subunit.</text>
</comment>
<comment type="subunit">
    <text evidence="1">Homodimer which binds Holliday junction (HJ) DNA. The HJ becomes 2-fold symmetrical on binding to RuvC with unstacked arms; it has a different conformation from HJ DNA in complex with RuvA. In the full resolvosome a probable DNA-RuvA(4)-RuvB(12)-RuvC(2) complex forms which resolves the HJ.</text>
</comment>
<comment type="subcellular location">
    <subcellularLocation>
        <location evidence="1">Cytoplasm</location>
    </subcellularLocation>
</comment>
<comment type="similarity">
    <text evidence="1">Belongs to the RuvC family.</text>
</comment>
<comment type="sequence caution" evidence="2">
    <conflict type="erroneous initiation">
        <sequence resource="EMBL-CDS" id="ABJ01214"/>
    </conflict>
    <text>Extended N-terminus.</text>
</comment>
<organism>
    <name type="scientific">Escherichia coli O1:K1 / APEC</name>
    <dbReference type="NCBI Taxonomy" id="405955"/>
    <lineage>
        <taxon>Bacteria</taxon>
        <taxon>Pseudomonadati</taxon>
        <taxon>Pseudomonadota</taxon>
        <taxon>Gammaproteobacteria</taxon>
        <taxon>Enterobacterales</taxon>
        <taxon>Enterobacteriaceae</taxon>
        <taxon>Escherichia</taxon>
    </lineage>
</organism>
<name>RUVC_ECOK1</name>
<protein>
    <recommendedName>
        <fullName evidence="1">Crossover junction endodeoxyribonuclease RuvC</fullName>
        <ecNumber evidence="1">3.1.21.10</ecNumber>
    </recommendedName>
    <alternativeName>
        <fullName evidence="1">Holliday junction nuclease RuvC</fullName>
    </alternativeName>
    <alternativeName>
        <fullName evidence="1">Holliday junction resolvase RuvC</fullName>
    </alternativeName>
</protein>